<accession>Q9UPR3</accession>
<accession>D3DVB7</accession>
<accession>Q5QJE7</accession>
<accession>Q659C7</accession>
<accession>Q8IXC0</accession>
<accession>Q8IY09</accession>
<accession>Q96IJ7</accession>
<name>SMG5_HUMAN</name>
<keyword id="KW-0002">3D-structure</keyword>
<keyword id="KW-0007">Acetylation</keyword>
<keyword id="KW-0175">Coiled coil</keyword>
<keyword id="KW-0963">Cytoplasm</keyword>
<keyword id="KW-0866">Nonsense-mediated mRNA decay</keyword>
<keyword id="KW-0539">Nucleus</keyword>
<keyword id="KW-0597">Phosphoprotein</keyword>
<keyword id="KW-1267">Proteomics identification</keyword>
<keyword id="KW-1185">Reference proteome</keyword>
<comment type="function">
    <text evidence="7">Plays a role in nonsense-mediated mRNA decay. Does not have RNase activity by itself. Promotes dephosphorylation of UPF1. Together with SMG7 is thought to provide a link to the mRNA degradation machinery involving exonucleolytic pathways, and to serve as an adapter for UPF1 to protein phosphatase 2A (PP2A), thereby triggering UPF1 dephosphorylation. Necessary for TERT activity.</text>
</comment>
<comment type="subunit">
    <text evidence="4 5">Interacts with TERT, PPP2CA and SMG1. Part of a complex that contains SMG1, SMG5, SMG7, PPP2CA, a short isoform of UPF3A (isoform UPF3AS, but not isoform UPF3AL) and phosphorylated UPF1. Not detected in complexes that contain unphosphorylated UPF1.</text>
</comment>
<comment type="interaction">
    <interactant intactId="EBI-3400861">
        <id>Q9UPR3</id>
    </interactant>
    <interactant intactId="EBI-719830">
        <id>Q92540</id>
        <label>SMG7</label>
    </interactant>
    <organismsDiffer>false</organismsDiffer>
    <experiments>5</experiments>
</comment>
<comment type="interaction">
    <interactant intactId="EBI-3400861">
        <id>Q9UPR3</id>
    </interactant>
    <interactant intactId="EBI-373492">
        <id>Q92900-2</id>
        <label>UPF1</label>
    </interactant>
    <organismsDiffer>false</organismsDiffer>
    <experiments>2</experiments>
</comment>
<comment type="subcellular location">
    <subcellularLocation>
        <location evidence="5">Cytoplasm</location>
    </subcellularLocation>
    <subcellularLocation>
        <location evidence="5">Nucleus</location>
    </subcellularLocation>
    <text>Predominantly cytoplasmic, and nuclear. Shuttles between nucleus and cytoplasm. Detected in cytoplasmic mRNA decay bodies.</text>
</comment>
<comment type="tissue specificity">
    <text evidence="4 5">Ubiquitous.</text>
</comment>
<comment type="sequence caution" evidence="11">
    <conflict type="erroneous initiation">
        <sequence resource="EMBL-CDS" id="BAA83041"/>
    </conflict>
    <text>Extended N-terminus.</text>
</comment>
<organism>
    <name type="scientific">Homo sapiens</name>
    <name type="common">Human</name>
    <dbReference type="NCBI Taxonomy" id="9606"/>
    <lineage>
        <taxon>Eukaryota</taxon>
        <taxon>Metazoa</taxon>
        <taxon>Chordata</taxon>
        <taxon>Craniata</taxon>
        <taxon>Vertebrata</taxon>
        <taxon>Euteleostomi</taxon>
        <taxon>Mammalia</taxon>
        <taxon>Eutheria</taxon>
        <taxon>Euarchontoglires</taxon>
        <taxon>Primates</taxon>
        <taxon>Haplorrhini</taxon>
        <taxon>Catarrhini</taxon>
        <taxon>Hominidae</taxon>
        <taxon>Homo</taxon>
    </lineage>
</organism>
<gene>
    <name evidence="12" type="primary">SMG5</name>
    <name evidence="12" type="synonym">EST1B</name>
    <name evidence="12" type="synonym">KIAA1089</name>
</gene>
<sequence length="1016" mass="113928">MSQGPPTGESSEPEAKVLHTKRLYRAVVEAVHRLDLILCNKTAYQEVFKPENISLRNKLRELCVKLMFLHPVDYGRKAEELLWRKVYYEVIQLIKTNKKHIHSRSTLECAYRTHLVAGIGFYQHLLLYIQSHYQLELQCCIDWTHVTDPLIGCKKPVSASGKEMDWAQMACHRCLVYLGDLSRYQNELAGVDTELLAERFYYQALSVAPQIGMPFNQLGTLAGSKYYNVEAMYCYLRCIQSEVSFEGAYGNLKRLYDKAAKMYHQLKKCETRKLSPGKKRCKDIKRLLVNFMYLQSLLQPKSSSVDSELTSLCQSVLEDFNLCLFYLPSSPNLSLASEDEEEYESGYAFLPDLLIFQMVIICLMCVHSLERAGSKQYSAAIAFTLALFSHLVNHVNIRLQAELEEGENPVPAFQSDGTDEPESKEPVEKEEEPDPEPPPVTPQVGEGRKSRKFSRLSCLRRRRHPPKVGDDSDLSEGFESDSSHDSARASEGSDSGSDKSLEGGGTAFDAETDSEMNSQESRSDLEDMEEEEGTRSPTLEPPRGRSEAPDSLNGPLGPSEASIASNLQAMSTQMFQTKRCFRLAPTFSNLLLQPTTNPHTSASHRPCVNGDVDKPSEPASEEGSESEGSESSGRSCRNERSIQEKLQVLMAEGLLPAVKVFLDWLRTNPDLIIVCAQSSQSLWNRLSVLLNLLPAAGELQESGLALCPEVQDLLEGCELPDLPSSLLLPEDMALRNLPPLRAAHRRFNFDTDRPLLSTLEESVVRICCIRSFGHFIARLQGSILQFNPEVGIFVSIAQSEQESLLQQAQAQFRMAQEEARRNRLMRDMAQLRLQLEVSQLEGSLQQPKAQSAMSPYLVPDTQALCHHLPVIRQLATSGRFIVIIPRTVIDGLDLLKKEHPGARDGIRYLEAEFKKGNRYIRCQKEVGKSFERHKLKRQDADAWTLYKILDSCKQLTLAQGAGEEDPSGMVTIITGLPLDNPSVLSGPMQAALQAAAHASVDIKNVLDFYKQWKEIG</sequence>
<protein>
    <recommendedName>
        <fullName evidence="12">Nonsense-mediated mRNA decay factor SMG5</fullName>
    </recommendedName>
    <alternativeName>
        <fullName evidence="8">EST1-like protein B</fullName>
    </alternativeName>
    <alternativeName>
        <fullName evidence="10">LPTS-RP1</fullName>
    </alternativeName>
    <alternativeName>
        <fullName evidence="8">LPTS-interacting protein</fullName>
    </alternativeName>
    <alternativeName>
        <fullName evidence="9">SMG-5 homolog</fullName>
        <shortName evidence="9">hSMG-5</shortName>
    </alternativeName>
</protein>
<evidence type="ECO:0000250" key="1">
    <source>
        <dbReference type="UniProtKB" id="Q6ZPY2"/>
    </source>
</evidence>
<evidence type="ECO:0000255" key="2"/>
<evidence type="ECO:0000256" key="3">
    <source>
        <dbReference type="SAM" id="MobiDB-lite"/>
    </source>
</evidence>
<evidence type="ECO:0000269" key="4">
    <source>
    </source>
</evidence>
<evidence type="ECO:0000269" key="5">
    <source>
    </source>
</evidence>
<evidence type="ECO:0000269" key="6">
    <source>
    </source>
</evidence>
<evidence type="ECO:0000269" key="7">
    <source>
    </source>
</evidence>
<evidence type="ECO:0000303" key="8">
    <source>
    </source>
</evidence>
<evidence type="ECO:0000303" key="9">
    <source>
    </source>
</evidence>
<evidence type="ECO:0000303" key="10">
    <source ref="3"/>
</evidence>
<evidence type="ECO:0000305" key="11"/>
<evidence type="ECO:0000312" key="12">
    <source>
        <dbReference type="HGNC" id="HGNC:24644"/>
    </source>
</evidence>
<evidence type="ECO:0007744" key="13">
    <source>
    </source>
</evidence>
<evidence type="ECO:0007744" key="14">
    <source>
    </source>
</evidence>
<evidence type="ECO:0007829" key="15">
    <source>
        <dbReference type="PDB" id="2HWY"/>
    </source>
</evidence>
<feature type="initiator methionine" description="Removed" evidence="13">
    <location>
        <position position="1"/>
    </location>
</feature>
<feature type="chain" id="PRO_0000076322" description="Nonsense-mediated mRNA decay factor SMG5">
    <location>
        <begin position="2"/>
        <end position="1016"/>
    </location>
</feature>
<feature type="domain" description="PINc">
    <location>
        <begin position="872"/>
        <end position="995"/>
    </location>
</feature>
<feature type="region of interest" description="Disordered" evidence="3">
    <location>
        <begin position="408"/>
        <end position="561"/>
    </location>
</feature>
<feature type="region of interest" description="Disordered" evidence="3">
    <location>
        <begin position="594"/>
        <end position="637"/>
    </location>
</feature>
<feature type="coiled-coil region" evidence="2">
    <location>
        <begin position="798"/>
        <end position="841"/>
    </location>
</feature>
<feature type="compositionally biased region" description="Basic residues" evidence="3">
    <location>
        <begin position="449"/>
        <end position="466"/>
    </location>
</feature>
<feature type="compositionally biased region" description="Polar residues" evidence="3">
    <location>
        <begin position="594"/>
        <end position="603"/>
    </location>
</feature>
<feature type="compositionally biased region" description="Acidic residues" evidence="3">
    <location>
        <begin position="619"/>
        <end position="628"/>
    </location>
</feature>
<feature type="modified residue" description="N-acetylserine" evidence="13">
    <location>
        <position position="2"/>
    </location>
</feature>
<feature type="modified residue" description="Phosphoserine" evidence="14">
    <location>
        <position position="2"/>
    </location>
</feature>
<feature type="modified residue" description="Phosphoserine" evidence="1">
    <location>
        <position position="423"/>
    </location>
</feature>
<feature type="sequence variant" id="VAR_030828" description="In dbSNP:rs17853821." evidence="6">
    <original>N</original>
    <variation>D</variation>
    <location>
        <position position="1004"/>
    </location>
</feature>
<feature type="mutagenesis site" description="Abolishes stimulation of RENT1 dephosphorylation." evidence="5">
    <original>D</original>
    <variation>A</variation>
    <location>
        <position position="860"/>
    </location>
</feature>
<feature type="sequence conflict" description="In Ref. 3; AAQ84301." evidence="11" ref="3">
    <original>A</original>
    <variation>S</variation>
    <location>
        <position position="372"/>
    </location>
</feature>
<feature type="sequence conflict" description="In Ref. 3; AAQ84301." evidence="11" ref="3">
    <original>T</original>
    <variation>A</variation>
    <location>
        <position position="384"/>
    </location>
</feature>
<feature type="sequence conflict" description="In Ref. 3; AAQ84301." evidence="11" ref="3">
    <original>G</original>
    <variation>R</variation>
    <location>
        <position position="496"/>
    </location>
</feature>
<feature type="sequence conflict" description="In Ref. 9; CAH56374." evidence="11" ref="9">
    <original>K</original>
    <variation>KK</variation>
    <location>
        <position position="915"/>
    </location>
</feature>
<feature type="strand" evidence="15">
    <location>
        <begin position="856"/>
        <end position="859"/>
    </location>
</feature>
<feature type="helix" evidence="15">
    <location>
        <begin position="861"/>
        <end position="866"/>
    </location>
</feature>
<feature type="helix" evidence="15">
    <location>
        <begin position="868"/>
        <end position="877"/>
    </location>
</feature>
<feature type="strand" evidence="15">
    <location>
        <begin position="878"/>
        <end position="884"/>
    </location>
</feature>
<feature type="helix" evidence="15">
    <location>
        <begin position="886"/>
        <end position="895"/>
    </location>
</feature>
<feature type="helix" evidence="15">
    <location>
        <begin position="900"/>
        <end position="915"/>
    </location>
</feature>
<feature type="strand" evidence="15">
    <location>
        <begin position="918"/>
        <end position="922"/>
    </location>
</feature>
<feature type="helix" evidence="15">
    <location>
        <begin position="946"/>
        <end position="955"/>
    </location>
</feature>
<feature type="strand" evidence="15">
    <location>
        <begin position="977"/>
        <end position="980"/>
    </location>
</feature>
<feature type="helix" evidence="15">
    <location>
        <begin position="992"/>
        <end position="996"/>
    </location>
</feature>
<feature type="strand" evidence="15">
    <location>
        <begin position="1000"/>
        <end position="1002"/>
    </location>
</feature>
<feature type="helix" evidence="15">
    <location>
        <begin position="1005"/>
        <end position="1011"/>
    </location>
</feature>
<proteinExistence type="evidence at protein level"/>
<reference key="1">
    <citation type="journal article" date="2003" name="Mol. Cell">
        <title>Phosphorylation of hUPF1 induces formation of mRNA surveillance complexes containing hSMG-5 and hSMG-7.</title>
        <authorList>
            <person name="Ohnishi T."/>
            <person name="Yamashita A."/>
            <person name="Kashima I."/>
            <person name="Schell T."/>
            <person name="Anders K.R."/>
            <person name="Grimson A."/>
            <person name="Hachiya T."/>
            <person name="Hentze M.W."/>
            <person name="Anderson P."/>
            <person name="Ohno S."/>
        </authorList>
    </citation>
    <scope>NUCLEOTIDE SEQUENCE [MRNA]</scope>
    <scope>MUTAGENESIS OF ASP-860</scope>
    <scope>INTERACTION WITH PPP2CA; SMG7 AND SMG1</scope>
    <scope>IDENTIFICATION IN COMPLEXES WITH SMG7; PPP2CA AND PHOSPHORYLATED RENT1</scope>
    <scope>SUBCELLULAR LOCATION</scope>
    <scope>TISSUE SPECIFICITY</scope>
    <source>
        <tissue>Cervix carcinoma</tissue>
    </source>
</reference>
<reference key="2">
    <citation type="journal article" date="2003" name="Curr. Biol.">
        <title>Functional conservation of the telomerase protein Est1p in humans.</title>
        <authorList>
            <person name="Snow B.E."/>
            <person name="Erdmann N."/>
            <person name="Cruickshank J."/>
            <person name="Goldman H."/>
            <person name="Gill R.M."/>
            <person name="Robinson M.O."/>
            <person name="Harrington L."/>
        </authorList>
    </citation>
    <scope>NUCLEOTIDE SEQUENCE [MRNA]</scope>
    <scope>INTERACTION WITH TERT</scope>
    <scope>TISSUE SPECIFICITY</scope>
</reference>
<reference key="3">
    <citation type="submission" date="2003-07" db="EMBL/GenBank/DDBJ databases">
        <title>LPTS-RP1, a LPTS interacting protein.</title>
        <authorList>
            <person name="Song H."/>
            <person name="Zhao M."/>
            <person name="Li T."/>
        </authorList>
    </citation>
    <scope>NUCLEOTIDE SEQUENCE [MRNA]</scope>
    <source>
        <tissue>Liver</tissue>
    </source>
</reference>
<reference key="4">
    <citation type="journal article" date="1999" name="DNA Res.">
        <title>Prediction of the coding sequences of unidentified human genes. XIV. The complete sequences of 100 new cDNA clones from brain which code for large proteins in vitro.</title>
        <authorList>
            <person name="Kikuno R."/>
            <person name="Nagase T."/>
            <person name="Ishikawa K."/>
            <person name="Hirosawa M."/>
            <person name="Miyajima N."/>
            <person name="Tanaka A."/>
            <person name="Kotani H."/>
            <person name="Nomura N."/>
            <person name="Ohara O."/>
        </authorList>
    </citation>
    <scope>NUCLEOTIDE SEQUENCE [LARGE SCALE MRNA]</scope>
    <source>
        <tissue>Brain</tissue>
    </source>
</reference>
<reference key="5">
    <citation type="journal article" date="2002" name="DNA Res.">
        <title>Construction of expression-ready cDNA clones for KIAA genes: manual curation of 330 KIAA cDNA clones.</title>
        <authorList>
            <person name="Nakajima D."/>
            <person name="Okazaki N."/>
            <person name="Yamakawa H."/>
            <person name="Kikuno R."/>
            <person name="Ohara O."/>
            <person name="Nagase T."/>
        </authorList>
    </citation>
    <scope>SEQUENCE REVISION</scope>
</reference>
<reference key="6">
    <citation type="journal article" date="2006" name="Nature">
        <title>The DNA sequence and biological annotation of human chromosome 1.</title>
        <authorList>
            <person name="Gregory S.G."/>
            <person name="Barlow K.F."/>
            <person name="McLay K.E."/>
            <person name="Kaul R."/>
            <person name="Swarbreck D."/>
            <person name="Dunham A."/>
            <person name="Scott C.E."/>
            <person name="Howe K.L."/>
            <person name="Woodfine K."/>
            <person name="Spencer C.C.A."/>
            <person name="Jones M.C."/>
            <person name="Gillson C."/>
            <person name="Searle S."/>
            <person name="Zhou Y."/>
            <person name="Kokocinski F."/>
            <person name="McDonald L."/>
            <person name="Evans R."/>
            <person name="Phillips K."/>
            <person name="Atkinson A."/>
            <person name="Cooper R."/>
            <person name="Jones C."/>
            <person name="Hall R.E."/>
            <person name="Andrews T.D."/>
            <person name="Lloyd C."/>
            <person name="Ainscough R."/>
            <person name="Almeida J.P."/>
            <person name="Ambrose K.D."/>
            <person name="Anderson F."/>
            <person name="Andrew R.W."/>
            <person name="Ashwell R.I.S."/>
            <person name="Aubin K."/>
            <person name="Babbage A.K."/>
            <person name="Bagguley C.L."/>
            <person name="Bailey J."/>
            <person name="Beasley H."/>
            <person name="Bethel G."/>
            <person name="Bird C.P."/>
            <person name="Bray-Allen S."/>
            <person name="Brown J.Y."/>
            <person name="Brown A.J."/>
            <person name="Buckley D."/>
            <person name="Burton J."/>
            <person name="Bye J."/>
            <person name="Carder C."/>
            <person name="Chapman J.C."/>
            <person name="Clark S.Y."/>
            <person name="Clarke G."/>
            <person name="Clee C."/>
            <person name="Cobley V."/>
            <person name="Collier R.E."/>
            <person name="Corby N."/>
            <person name="Coville G.J."/>
            <person name="Davies J."/>
            <person name="Deadman R."/>
            <person name="Dunn M."/>
            <person name="Earthrowl M."/>
            <person name="Ellington A.G."/>
            <person name="Errington H."/>
            <person name="Frankish A."/>
            <person name="Frankland J."/>
            <person name="French L."/>
            <person name="Garner P."/>
            <person name="Garnett J."/>
            <person name="Gay L."/>
            <person name="Ghori M.R.J."/>
            <person name="Gibson R."/>
            <person name="Gilby L.M."/>
            <person name="Gillett W."/>
            <person name="Glithero R.J."/>
            <person name="Grafham D.V."/>
            <person name="Griffiths C."/>
            <person name="Griffiths-Jones S."/>
            <person name="Grocock R."/>
            <person name="Hammond S."/>
            <person name="Harrison E.S.I."/>
            <person name="Hart E."/>
            <person name="Haugen E."/>
            <person name="Heath P.D."/>
            <person name="Holmes S."/>
            <person name="Holt K."/>
            <person name="Howden P.J."/>
            <person name="Hunt A.R."/>
            <person name="Hunt S.E."/>
            <person name="Hunter G."/>
            <person name="Isherwood J."/>
            <person name="James R."/>
            <person name="Johnson C."/>
            <person name="Johnson D."/>
            <person name="Joy A."/>
            <person name="Kay M."/>
            <person name="Kershaw J.K."/>
            <person name="Kibukawa M."/>
            <person name="Kimberley A.M."/>
            <person name="King A."/>
            <person name="Knights A.J."/>
            <person name="Lad H."/>
            <person name="Laird G."/>
            <person name="Lawlor S."/>
            <person name="Leongamornlert D.A."/>
            <person name="Lloyd D.M."/>
            <person name="Loveland J."/>
            <person name="Lovell J."/>
            <person name="Lush M.J."/>
            <person name="Lyne R."/>
            <person name="Martin S."/>
            <person name="Mashreghi-Mohammadi M."/>
            <person name="Matthews L."/>
            <person name="Matthews N.S.W."/>
            <person name="McLaren S."/>
            <person name="Milne S."/>
            <person name="Mistry S."/>
            <person name="Moore M.J.F."/>
            <person name="Nickerson T."/>
            <person name="O'Dell C.N."/>
            <person name="Oliver K."/>
            <person name="Palmeiri A."/>
            <person name="Palmer S.A."/>
            <person name="Parker A."/>
            <person name="Patel D."/>
            <person name="Pearce A.V."/>
            <person name="Peck A.I."/>
            <person name="Pelan S."/>
            <person name="Phelps K."/>
            <person name="Phillimore B.J."/>
            <person name="Plumb R."/>
            <person name="Rajan J."/>
            <person name="Raymond C."/>
            <person name="Rouse G."/>
            <person name="Saenphimmachak C."/>
            <person name="Sehra H.K."/>
            <person name="Sheridan E."/>
            <person name="Shownkeen R."/>
            <person name="Sims S."/>
            <person name="Skuce C.D."/>
            <person name="Smith M."/>
            <person name="Steward C."/>
            <person name="Subramanian S."/>
            <person name="Sycamore N."/>
            <person name="Tracey A."/>
            <person name="Tromans A."/>
            <person name="Van Helmond Z."/>
            <person name="Wall M."/>
            <person name="Wallis J.M."/>
            <person name="White S."/>
            <person name="Whitehead S.L."/>
            <person name="Wilkinson J.E."/>
            <person name="Willey D.L."/>
            <person name="Williams H."/>
            <person name="Wilming L."/>
            <person name="Wray P.W."/>
            <person name="Wu Z."/>
            <person name="Coulson A."/>
            <person name="Vaudin M."/>
            <person name="Sulston J.E."/>
            <person name="Durbin R.M."/>
            <person name="Hubbard T."/>
            <person name="Wooster R."/>
            <person name="Dunham I."/>
            <person name="Carter N.P."/>
            <person name="McVean G."/>
            <person name="Ross M.T."/>
            <person name="Harrow J."/>
            <person name="Olson M.V."/>
            <person name="Beck S."/>
            <person name="Rogers J."/>
            <person name="Bentley D.R."/>
        </authorList>
    </citation>
    <scope>NUCLEOTIDE SEQUENCE [LARGE SCALE GENOMIC DNA]</scope>
</reference>
<reference key="7">
    <citation type="submission" date="2005-09" db="EMBL/GenBank/DDBJ databases">
        <authorList>
            <person name="Mural R.J."/>
            <person name="Istrail S."/>
            <person name="Sutton G.G."/>
            <person name="Florea L."/>
            <person name="Halpern A.L."/>
            <person name="Mobarry C.M."/>
            <person name="Lippert R."/>
            <person name="Walenz B."/>
            <person name="Shatkay H."/>
            <person name="Dew I."/>
            <person name="Miller J.R."/>
            <person name="Flanigan M.J."/>
            <person name="Edwards N.J."/>
            <person name="Bolanos R."/>
            <person name="Fasulo D."/>
            <person name="Halldorsson B.V."/>
            <person name="Hannenhalli S."/>
            <person name="Turner R."/>
            <person name="Yooseph S."/>
            <person name="Lu F."/>
            <person name="Nusskern D.R."/>
            <person name="Shue B.C."/>
            <person name="Zheng X.H."/>
            <person name="Zhong F."/>
            <person name="Delcher A.L."/>
            <person name="Huson D.H."/>
            <person name="Kravitz S.A."/>
            <person name="Mouchard L."/>
            <person name="Reinert K."/>
            <person name="Remington K.A."/>
            <person name="Clark A.G."/>
            <person name="Waterman M.S."/>
            <person name="Eichler E.E."/>
            <person name="Adams M.D."/>
            <person name="Hunkapiller M.W."/>
            <person name="Myers E.W."/>
            <person name="Venter J.C."/>
        </authorList>
    </citation>
    <scope>NUCLEOTIDE SEQUENCE [LARGE SCALE GENOMIC DNA]</scope>
</reference>
<reference key="8">
    <citation type="journal article" date="2004" name="Genome Res.">
        <title>The status, quality, and expansion of the NIH full-length cDNA project: the Mammalian Gene Collection (MGC).</title>
        <authorList>
            <consortium name="The MGC Project Team"/>
        </authorList>
    </citation>
    <scope>NUCLEOTIDE SEQUENCE [LARGE SCALE MRNA]</scope>
    <scope>VARIANT ASP-1004</scope>
    <source>
        <tissue>Muscle</tissue>
        <tissue>Testis</tissue>
    </source>
</reference>
<reference key="9">
    <citation type="journal article" date="2007" name="BMC Genomics">
        <title>The full-ORF clone resource of the German cDNA consortium.</title>
        <authorList>
            <person name="Bechtel S."/>
            <person name="Rosenfelder H."/>
            <person name="Duda A."/>
            <person name="Schmidt C.P."/>
            <person name="Ernst U."/>
            <person name="Wellenreuther R."/>
            <person name="Mehrle A."/>
            <person name="Schuster C."/>
            <person name="Bahr A."/>
            <person name="Bloecker H."/>
            <person name="Heubner D."/>
            <person name="Hoerlein A."/>
            <person name="Michel G."/>
            <person name="Wedler H."/>
            <person name="Koehrer K."/>
            <person name="Ottenwaelder B."/>
            <person name="Poustka A."/>
            <person name="Wiemann S."/>
            <person name="Schupp I."/>
        </authorList>
    </citation>
    <scope>NUCLEOTIDE SEQUENCE [LARGE SCALE MRNA] OF 584-1016</scope>
    <source>
        <tissue>Brain</tissue>
    </source>
</reference>
<reference key="10">
    <citation type="journal article" date="2004" name="Mol. Cell">
        <title>SMG7 acts as a molecular link between mRNA surveillance and mRNA decay.</title>
        <authorList>
            <person name="Unterholzner L."/>
            <person name="Izaurralde E."/>
        </authorList>
    </citation>
    <scope>ASSOCIATION WITH CYTOPLASMIC MRNA DECAY BODIES</scope>
</reference>
<reference key="11">
    <citation type="journal article" date="2009" name="Anal. Chem.">
        <title>Lys-N and trypsin cover complementary parts of the phosphoproteome in a refined SCX-based approach.</title>
        <authorList>
            <person name="Gauci S."/>
            <person name="Helbig A.O."/>
            <person name="Slijper M."/>
            <person name="Krijgsveld J."/>
            <person name="Heck A.J."/>
            <person name="Mohammed S."/>
        </authorList>
    </citation>
    <scope>ACETYLATION [LARGE SCALE ANALYSIS] AT SER-2</scope>
    <scope>CLEAVAGE OF INITIATOR METHIONINE [LARGE SCALE ANALYSIS]</scope>
    <scope>IDENTIFICATION BY MASS SPECTROMETRY [LARGE SCALE ANALYSIS]</scope>
</reference>
<reference key="12">
    <citation type="journal article" date="2013" name="J. Proteome Res.">
        <title>Toward a comprehensive characterization of a human cancer cell phosphoproteome.</title>
        <authorList>
            <person name="Zhou H."/>
            <person name="Di Palma S."/>
            <person name="Preisinger C."/>
            <person name="Peng M."/>
            <person name="Polat A.N."/>
            <person name="Heck A.J."/>
            <person name="Mohammed S."/>
        </authorList>
    </citation>
    <scope>PHOSPHORYLATION [LARGE SCALE ANALYSIS] AT SER-2</scope>
    <scope>IDENTIFICATION BY MASS SPECTROMETRY [LARGE SCALE ANALYSIS]</scope>
    <source>
        <tissue>Cervix carcinoma</tissue>
        <tissue>Erythroleukemia</tissue>
    </source>
</reference>
<reference key="13">
    <citation type="journal article" date="2006" name="EMBO J.">
        <title>Structures of the PIN domains of SMG6 and SMG5 reveal a nuclease within the mRNA surveillance complex.</title>
        <authorList>
            <person name="Glavan F."/>
            <person name="Behm-Ansmant I."/>
            <person name="Izaurralde E."/>
            <person name="Conti E."/>
        </authorList>
    </citation>
    <scope>X-RAY CRYSTALLOGRAPHY (2.75 ANGSTROMS) OF 853-1016</scope>
    <scope>FUNCTION</scope>
</reference>
<dbReference type="EMBL" id="AB085691">
    <property type="protein sequence ID" value="BAC53623.1"/>
    <property type="molecule type" value="mRNA"/>
</dbReference>
<dbReference type="EMBL" id="AY168922">
    <property type="protein sequence ID" value="AAO17582.1"/>
    <property type="molecule type" value="mRNA"/>
</dbReference>
<dbReference type="EMBL" id="AY336728">
    <property type="protein sequence ID" value="AAQ84301.1"/>
    <property type="molecule type" value="mRNA"/>
</dbReference>
<dbReference type="EMBL" id="AB029012">
    <property type="protein sequence ID" value="BAA83041.2"/>
    <property type="status" value="ALT_INIT"/>
    <property type="molecule type" value="mRNA"/>
</dbReference>
<dbReference type="EMBL" id="AL589685">
    <property type="status" value="NOT_ANNOTATED_CDS"/>
    <property type="molecule type" value="Genomic_DNA"/>
</dbReference>
<dbReference type="EMBL" id="AL135927">
    <property type="status" value="NOT_ANNOTATED_CDS"/>
    <property type="molecule type" value="Genomic_DNA"/>
</dbReference>
<dbReference type="EMBL" id="CH471121">
    <property type="protein sequence ID" value="EAW52973.1"/>
    <property type="molecule type" value="Genomic_DNA"/>
</dbReference>
<dbReference type="EMBL" id="CH471121">
    <property type="protein sequence ID" value="EAW52974.1"/>
    <property type="molecule type" value="Genomic_DNA"/>
</dbReference>
<dbReference type="EMBL" id="BC007453">
    <property type="protein sequence ID" value="AAH07453.2"/>
    <property type="molecule type" value="mRNA"/>
</dbReference>
<dbReference type="EMBL" id="BC038296">
    <property type="protein sequence ID" value="AAH38296.1"/>
    <property type="molecule type" value="mRNA"/>
</dbReference>
<dbReference type="EMBL" id="AL137738">
    <property type="protein sequence ID" value="CAH56374.1"/>
    <property type="molecule type" value="mRNA"/>
</dbReference>
<dbReference type="CCDS" id="CCDS1137.1"/>
<dbReference type="RefSeq" id="NP_056142.2">
    <property type="nucleotide sequence ID" value="NM_015327.3"/>
</dbReference>
<dbReference type="PDB" id="2HWY">
    <property type="method" value="X-ray"/>
    <property type="resolution" value="2.75 A"/>
    <property type="chains" value="A/B=853-1016"/>
</dbReference>
<dbReference type="PDBsum" id="2HWY"/>
<dbReference type="SMR" id="Q9UPR3"/>
<dbReference type="BioGRID" id="116957">
    <property type="interactions" value="80"/>
</dbReference>
<dbReference type="CORUM" id="Q9UPR3"/>
<dbReference type="FunCoup" id="Q9UPR3">
    <property type="interactions" value="4160"/>
</dbReference>
<dbReference type="IntAct" id="Q9UPR3">
    <property type="interactions" value="23"/>
</dbReference>
<dbReference type="MINT" id="Q9UPR3"/>
<dbReference type="STRING" id="9606.ENSP00000355261"/>
<dbReference type="GlyGen" id="Q9UPR3">
    <property type="glycosylation" value="1 site, 1 N-linked glycan (1 site)"/>
</dbReference>
<dbReference type="iPTMnet" id="Q9UPR3"/>
<dbReference type="PhosphoSitePlus" id="Q9UPR3"/>
<dbReference type="BioMuta" id="SMG5"/>
<dbReference type="DMDM" id="84029494"/>
<dbReference type="jPOST" id="Q9UPR3"/>
<dbReference type="MassIVE" id="Q9UPR3"/>
<dbReference type="PaxDb" id="9606-ENSP00000355261"/>
<dbReference type="PeptideAtlas" id="Q9UPR3"/>
<dbReference type="ProteomicsDB" id="85426"/>
<dbReference type="Pumba" id="Q9UPR3"/>
<dbReference type="Antibodypedia" id="34209">
    <property type="antibodies" value="109 antibodies from 24 providers"/>
</dbReference>
<dbReference type="DNASU" id="23381"/>
<dbReference type="Ensembl" id="ENST00000361813.5">
    <property type="protein sequence ID" value="ENSP00000355261.5"/>
    <property type="gene ID" value="ENSG00000198952.8"/>
</dbReference>
<dbReference type="GeneID" id="23381"/>
<dbReference type="KEGG" id="hsa:23381"/>
<dbReference type="MANE-Select" id="ENST00000361813.5">
    <property type="protein sequence ID" value="ENSP00000355261.5"/>
    <property type="RefSeq nucleotide sequence ID" value="NM_015327.3"/>
    <property type="RefSeq protein sequence ID" value="NP_056142.2"/>
</dbReference>
<dbReference type="UCSC" id="uc001foc.5">
    <property type="organism name" value="human"/>
</dbReference>
<dbReference type="AGR" id="HGNC:24644"/>
<dbReference type="CTD" id="23381"/>
<dbReference type="DisGeNET" id="23381"/>
<dbReference type="GeneCards" id="SMG5"/>
<dbReference type="HGNC" id="HGNC:24644">
    <property type="gene designation" value="SMG5"/>
</dbReference>
<dbReference type="HPA" id="ENSG00000198952">
    <property type="expression patterns" value="Low tissue specificity"/>
</dbReference>
<dbReference type="MIM" id="610962">
    <property type="type" value="gene"/>
</dbReference>
<dbReference type="neXtProt" id="NX_Q9UPR3"/>
<dbReference type="OpenTargets" id="ENSG00000198952"/>
<dbReference type="PharmGKB" id="PA143485617"/>
<dbReference type="VEuPathDB" id="HostDB:ENSG00000198952"/>
<dbReference type="eggNOG" id="KOG2162">
    <property type="taxonomic scope" value="Eukaryota"/>
</dbReference>
<dbReference type="GeneTree" id="ENSGT00940000154566"/>
<dbReference type="HOGENOM" id="CLU_011872_0_0_1"/>
<dbReference type="InParanoid" id="Q9UPR3"/>
<dbReference type="OMA" id="CLMSISR"/>
<dbReference type="OrthoDB" id="5920073at2759"/>
<dbReference type="PAN-GO" id="Q9UPR3">
    <property type="GO annotations" value="4 GO annotations based on evolutionary models"/>
</dbReference>
<dbReference type="PhylomeDB" id="Q9UPR3"/>
<dbReference type="TreeFam" id="TF327119"/>
<dbReference type="PathwayCommons" id="Q9UPR3"/>
<dbReference type="Reactome" id="R-HSA-975957">
    <property type="pathway name" value="Nonsense Mediated Decay (NMD) enhanced by the Exon Junction Complex (EJC)"/>
</dbReference>
<dbReference type="SignaLink" id="Q9UPR3"/>
<dbReference type="SIGNOR" id="Q9UPR3"/>
<dbReference type="BioGRID-ORCS" id="23381">
    <property type="hits" value="648 hits in 1178 CRISPR screens"/>
</dbReference>
<dbReference type="ChiTaRS" id="SMG5">
    <property type="organism name" value="human"/>
</dbReference>
<dbReference type="EvolutionaryTrace" id="Q9UPR3"/>
<dbReference type="GeneWiki" id="SMG5"/>
<dbReference type="GenomeRNAi" id="23381"/>
<dbReference type="Pharos" id="Q9UPR3">
    <property type="development level" value="Tbio"/>
</dbReference>
<dbReference type="PRO" id="PR:Q9UPR3"/>
<dbReference type="Proteomes" id="UP000005640">
    <property type="component" value="Chromosome 1"/>
</dbReference>
<dbReference type="RNAct" id="Q9UPR3">
    <property type="molecule type" value="protein"/>
</dbReference>
<dbReference type="Bgee" id="ENSG00000198952">
    <property type="expression patterns" value="Expressed in apex of heart and 200 other cell types or tissues"/>
</dbReference>
<dbReference type="GO" id="GO:0005737">
    <property type="term" value="C:cytoplasm"/>
    <property type="evidence" value="ECO:0000314"/>
    <property type="project" value="HGNC-UCL"/>
</dbReference>
<dbReference type="GO" id="GO:0036464">
    <property type="term" value="C:cytoplasmic ribonucleoprotein granule"/>
    <property type="evidence" value="ECO:0000314"/>
    <property type="project" value="HPA"/>
</dbReference>
<dbReference type="GO" id="GO:0005829">
    <property type="term" value="C:cytosol"/>
    <property type="evidence" value="ECO:0000304"/>
    <property type="project" value="Reactome"/>
</dbReference>
<dbReference type="GO" id="GO:0005634">
    <property type="term" value="C:nucleus"/>
    <property type="evidence" value="ECO:0000314"/>
    <property type="project" value="HGNC-UCL"/>
</dbReference>
<dbReference type="GO" id="GO:0005697">
    <property type="term" value="C:telomerase holoenzyme complex"/>
    <property type="evidence" value="ECO:0000318"/>
    <property type="project" value="GO_Central"/>
</dbReference>
<dbReference type="GO" id="GO:0042826">
    <property type="term" value="F:histone deacetylase binding"/>
    <property type="evidence" value="ECO:0000353"/>
    <property type="project" value="BHF-UCL"/>
</dbReference>
<dbReference type="GO" id="GO:0051721">
    <property type="term" value="F:protein phosphatase 2A binding"/>
    <property type="evidence" value="ECO:0000314"/>
    <property type="project" value="HGNC-UCL"/>
</dbReference>
<dbReference type="GO" id="GO:0070034">
    <property type="term" value="F:telomerase RNA binding"/>
    <property type="evidence" value="ECO:0000353"/>
    <property type="project" value="BHF-UCL"/>
</dbReference>
<dbReference type="GO" id="GO:0042162">
    <property type="term" value="F:telomeric DNA binding"/>
    <property type="evidence" value="ECO:0000314"/>
    <property type="project" value="BHF-UCL"/>
</dbReference>
<dbReference type="GO" id="GO:0031625">
    <property type="term" value="F:ubiquitin protein ligase binding"/>
    <property type="evidence" value="ECO:0000353"/>
    <property type="project" value="BHF-UCL"/>
</dbReference>
<dbReference type="GO" id="GO:0006406">
    <property type="term" value="P:mRNA export from nucleus"/>
    <property type="evidence" value="ECO:0000304"/>
    <property type="project" value="HGNC-UCL"/>
</dbReference>
<dbReference type="GO" id="GO:0000184">
    <property type="term" value="P:nuclear-transcribed mRNA catabolic process, nonsense-mediated decay"/>
    <property type="evidence" value="ECO:0000318"/>
    <property type="project" value="GO_Central"/>
</dbReference>
<dbReference type="GO" id="GO:0035303">
    <property type="term" value="P:regulation of dephosphorylation"/>
    <property type="evidence" value="ECO:0000315"/>
    <property type="project" value="HGNC-UCL"/>
</dbReference>
<dbReference type="GO" id="GO:0032204">
    <property type="term" value="P:regulation of telomere maintenance"/>
    <property type="evidence" value="ECO:0000315"/>
    <property type="project" value="BHF-UCL"/>
</dbReference>
<dbReference type="GO" id="GO:0032210">
    <property type="term" value="P:regulation of telomere maintenance via telomerase"/>
    <property type="evidence" value="ECO:0000304"/>
    <property type="project" value="BHF-UCL"/>
</dbReference>
<dbReference type="CDD" id="cd09884">
    <property type="entry name" value="PIN_Smg5-like"/>
    <property type="match status" value="1"/>
</dbReference>
<dbReference type="DisProt" id="DP01878"/>
<dbReference type="FunFam" id="3.40.50.1010:FF:000017">
    <property type="entry name" value="protein SMG5 isoform X2"/>
    <property type="match status" value="1"/>
</dbReference>
<dbReference type="Gene3D" id="3.40.50.1010">
    <property type="entry name" value="5'-nuclease"/>
    <property type="match status" value="1"/>
</dbReference>
<dbReference type="Gene3D" id="1.25.40.10">
    <property type="entry name" value="Tetratricopeptide repeat domain"/>
    <property type="match status" value="1"/>
</dbReference>
<dbReference type="IDEAL" id="IID00107"/>
<dbReference type="InterPro" id="IPR018834">
    <property type="entry name" value="DNA/RNA-bd_Est1-type"/>
</dbReference>
<dbReference type="InterPro" id="IPR019458">
    <property type="entry name" value="Est1-like_N"/>
</dbReference>
<dbReference type="InterPro" id="IPR045153">
    <property type="entry name" value="Est1/Ebs1-like"/>
</dbReference>
<dbReference type="InterPro" id="IPR002716">
    <property type="entry name" value="PIN_dom"/>
</dbReference>
<dbReference type="InterPro" id="IPR011990">
    <property type="entry name" value="TPR-like_helical_dom_sf"/>
</dbReference>
<dbReference type="PANTHER" id="PTHR15696:SF39">
    <property type="entry name" value="NONSENSE-MEDIATED MRNA DECAY FACTOR SMG5"/>
    <property type="match status" value="1"/>
</dbReference>
<dbReference type="PANTHER" id="PTHR15696">
    <property type="entry name" value="SMG-7 SUPPRESSOR WITH MORPHOLOGICAL EFFECT ON GENITALIA PROTEIN 7"/>
    <property type="match status" value="1"/>
</dbReference>
<dbReference type="Pfam" id="PF10374">
    <property type="entry name" value="EST1"/>
    <property type="match status" value="1"/>
</dbReference>
<dbReference type="Pfam" id="PF10373">
    <property type="entry name" value="EST1_DNA_bind"/>
    <property type="match status" value="1"/>
</dbReference>
<dbReference type="Pfam" id="PF13638">
    <property type="entry name" value="PIN_4"/>
    <property type="match status" value="1"/>
</dbReference>
<dbReference type="SMART" id="SM00670">
    <property type="entry name" value="PINc"/>
    <property type="match status" value="1"/>
</dbReference>
<dbReference type="SUPFAM" id="SSF48452">
    <property type="entry name" value="TPR-like"/>
    <property type="match status" value="1"/>
</dbReference>